<sequence length="524" mass="59975">MDTESTYSGYSYYSSHSKKSHRQGERTRERHKSPRNKDGRGSEKSVTIQPPTGEPLLGNDSTRTEEVQDDNWGETTTAITGTSEHSISQEDIARISKDMEDSVGLDCKRYLGLTVASFLGLLVFLTPIAFILLPPILWRDELEPCGTICEGLFISMAFKLLILLIGTWALFFRKRRADMPRVFVFRALLLVLIFLFVVSYWLFYGVRILDSRDRNYQGIVQYAVSLVDALLFIHYLAIVLLELRQLQPMFTLQVVRSTDGESRFYSLGHLSIQRAALVVLENYYKDFTIYNPNLLTASKFRAAKHMAGLKVYNVDGPSNNATGQSRAMIAAAARRRDSSHNELYYEEAEHERRVKKRKARLVVAVEEAFIHIQRLQAEEQQKAPGEVMDPREAAQAIFPSMARALQKYLRITRQQNYHSMESILQHLAFCITNGMTPKAFLERYLSAGPTLQYDKDRWLSTQWRLVSDEAVTNGLRDGIVFVLKCLDFSLVVNVKKIPFIILSEEFIDPKSHKFVLRLQSETSV</sequence>
<evidence type="ECO:0000250" key="1"/>
<evidence type="ECO:0000250" key="2">
    <source>
        <dbReference type="UniProtKB" id="Q80Z96"/>
    </source>
</evidence>
<evidence type="ECO:0000255" key="3"/>
<evidence type="ECO:0000256" key="4">
    <source>
        <dbReference type="SAM" id="MobiDB-lite"/>
    </source>
</evidence>
<evidence type="ECO:0000269" key="5">
    <source>
    </source>
</evidence>
<evidence type="ECO:0000269" key="6">
    <source>
    </source>
</evidence>
<evidence type="ECO:0000269" key="7">
    <source>
    </source>
</evidence>
<evidence type="ECO:0000269" key="8">
    <source>
    </source>
</evidence>
<evidence type="ECO:0000269" key="9">
    <source>
    </source>
</evidence>
<evidence type="ECO:0000303" key="10">
    <source ref="3"/>
</evidence>
<evidence type="ECO:0000305" key="11"/>
<evidence type="ECO:0007829" key="12">
    <source>
        <dbReference type="PDB" id="9JK6"/>
    </source>
</evidence>
<evidence type="ECO:0007829" key="13">
    <source>
        <dbReference type="PDB" id="9JK8"/>
    </source>
</evidence>
<evidence type="ECO:0007829" key="14">
    <source>
        <dbReference type="PDB" id="9JK9"/>
    </source>
</evidence>
<comment type="subunit">
    <text evidence="1">Heterodimer with VANGL2. Interacts through its C-terminal region with the N-terminal half of DVL1, DVL2 and DVL3. The PDZ domain of DVL1, DVL2 and DVL3 is required for the interaction (By similarity).</text>
</comment>
<comment type="interaction">
    <interactant intactId="EBI-682393">
        <id>Q8TAA9</id>
    </interactant>
    <interactant intactId="EBI-682379">
        <id>P27701</id>
        <label>CD82</label>
    </interactant>
    <organismsDiffer>false</organismsDiffer>
    <experiments>6</experiments>
</comment>
<comment type="interaction">
    <interactant intactId="EBI-682393">
        <id>Q8TAA9</id>
    </interactant>
    <interactant intactId="EBI-625022">
        <id>O43889-2</id>
        <label>CREB3</label>
    </interactant>
    <organismsDiffer>false</organismsDiffer>
    <experiments>3</experiments>
</comment>
<comment type="interaction">
    <interactant intactId="EBI-682393">
        <id>Q8TAA9</id>
    </interactant>
    <interactant intactId="EBI-1047946">
        <id>P26045</id>
        <label>PTPN3</label>
    </interactant>
    <organismsDiffer>false</organismsDiffer>
    <experiments>4</experiments>
</comment>
<comment type="subcellular location">
    <subcellularLocation>
        <location evidence="1">Cell membrane</location>
        <topology evidence="1">Multi-pass membrane protein</topology>
    </subcellularLocation>
</comment>
<comment type="alternative products">
    <event type="alternative splicing"/>
    <isoform>
        <id>Q8TAA9-1</id>
        <name>1</name>
        <sequence type="displayed"/>
    </isoform>
    <isoform>
        <id>Q8TAA9-2</id>
        <name>2</name>
        <sequence type="described" ref="VSP_008742"/>
    </isoform>
</comment>
<comment type="tissue specificity">
    <text evidence="5 6">According to PubMed:11956595, ubiquitously expressed. According to PubMed:12011995, expressed specifically in testis and ovary.</text>
</comment>
<comment type="disease" evidence="8 9">
    <disease id="DI-02042">
        <name>Neural tube defects</name>
        <acronym>NTD</acronym>
        <description>Congenital malformations of the central nervous system and adjacent structures related to defective neural tube closure during the first trimester of pregnancy. Failure of neural tube closure can occur at any level of the embryonic axis. Common NTD forms include anencephaly, myelomeningocele and spina bifida, which result from the failure of fusion in the cranial and spinal region of the neural tube. NTDs have a multifactorial etiology encompassing both genetic and environmental components.</description>
        <dbReference type="MIM" id="182940"/>
    </disease>
    <text>The disease is caused by variants affecting the gene represented in this entry.</text>
</comment>
<comment type="disease" evidence="8">
    <disease id="DI-02277">
        <name>Sacral defect with anterior meningocele</name>
        <acronym>SDAM</acronym>
        <description>Form of caudal dysgenesis. It is present at birth and becomes symptomatic later in life, usually because of obstructive labor in females, chronic constipation, or meningitis. Inheritance is autosomal dominant.</description>
        <dbReference type="MIM" id="600145"/>
    </disease>
    <text>The disease is caused by variants affecting the gene represented in this entry.</text>
</comment>
<comment type="similarity">
    <text evidence="11">Belongs to the Vang family.</text>
</comment>
<comment type="sequence caution" evidence="11">
    <conflict type="erroneous initiation">
        <sequence resource="EMBL-CDS" id="AAH32773"/>
    </conflict>
</comment>
<keyword id="KW-0002">3D-structure</keyword>
<keyword id="KW-0025">Alternative splicing</keyword>
<keyword id="KW-1003">Cell membrane</keyword>
<keyword id="KW-0225">Disease variant</keyword>
<keyword id="KW-0472">Membrane</keyword>
<keyword id="KW-0597">Phosphoprotein</keyword>
<keyword id="KW-1267">Proteomics identification</keyword>
<keyword id="KW-1185">Reference proteome</keyword>
<keyword id="KW-0812">Transmembrane</keyword>
<keyword id="KW-1133">Transmembrane helix</keyword>
<protein>
    <recommendedName>
        <fullName>Vang-like protein 1</fullName>
    </recommendedName>
    <alternativeName>
        <fullName>Loop-tail protein 2 homolog</fullName>
        <shortName>LPP2</shortName>
    </alternativeName>
    <alternativeName>
        <fullName>Strabismus 2</fullName>
    </alternativeName>
    <alternativeName>
        <fullName>Van Gogh-like protein 1</fullName>
    </alternativeName>
</protein>
<accession>Q8TAA9</accession>
<accession>Q5T1D3</accession>
<accession>Q5T1D4</accession>
<accession>Q86WG8</accession>
<accession>Q8N559</accession>
<feature type="chain" id="PRO_0000186193" description="Vang-like protein 1">
    <location>
        <begin position="1"/>
        <end position="524"/>
    </location>
</feature>
<feature type="topological domain" description="Cytoplasmic" evidence="3">
    <location>
        <begin position="1"/>
        <end position="117"/>
    </location>
</feature>
<feature type="transmembrane region" description="Helical; Name=1" evidence="3">
    <location>
        <begin position="118"/>
        <end position="138"/>
    </location>
</feature>
<feature type="topological domain" description="Extracellular" evidence="3">
    <location>
        <begin position="139"/>
        <end position="151"/>
    </location>
</feature>
<feature type="transmembrane region" description="Helical; Name=2" evidence="3">
    <location>
        <begin position="152"/>
        <end position="172"/>
    </location>
</feature>
<feature type="topological domain" description="Cytoplasmic" evidence="3">
    <location>
        <begin position="173"/>
        <end position="182"/>
    </location>
</feature>
<feature type="transmembrane region" description="Helical; Name=3" evidence="3">
    <location>
        <begin position="183"/>
        <end position="203"/>
    </location>
</feature>
<feature type="topological domain" description="Extracellular" evidence="3">
    <location>
        <begin position="204"/>
        <end position="222"/>
    </location>
</feature>
<feature type="transmembrane region" description="Helical; Name=4" evidence="3">
    <location>
        <begin position="223"/>
        <end position="243"/>
    </location>
</feature>
<feature type="topological domain" description="Cytoplasmic" evidence="3">
    <location>
        <begin position="244"/>
        <end position="524"/>
    </location>
</feature>
<feature type="region of interest" description="Disordered" evidence="4">
    <location>
        <begin position="1"/>
        <end position="85"/>
    </location>
</feature>
<feature type="compositionally biased region" description="Low complexity" evidence="4">
    <location>
        <begin position="1"/>
        <end position="15"/>
    </location>
</feature>
<feature type="compositionally biased region" description="Polar residues" evidence="4">
    <location>
        <begin position="73"/>
        <end position="85"/>
    </location>
</feature>
<feature type="modified residue" description="Phosphoserine" evidence="2">
    <location>
        <position position="86"/>
    </location>
</feature>
<feature type="modified residue" description="Phosphoserine" evidence="2">
    <location>
        <position position="88"/>
    </location>
</feature>
<feature type="splice variant" id="VSP_008742" description="In isoform 2." evidence="10">
    <location>
        <begin position="67"/>
        <end position="68"/>
    </location>
</feature>
<feature type="sequence variant" id="VAR_062321" description="In dbSNP:rs61734296." evidence="9">
    <original>E</original>
    <variation>K</variation>
    <location>
        <position position="25"/>
    </location>
</feature>
<feature type="sequence variant" id="VAR_062322" description="In NTD; uncertain significance; dbSNP:rs146695372." evidence="9">
    <original>S</original>
    <variation>L</variation>
    <location>
        <position position="83"/>
    </location>
</feature>
<feature type="sequence variant" id="VAR_027143" description="In dbSNP:rs4839469." evidence="7">
    <original>A</original>
    <variation>T</variation>
    <location>
        <position position="116"/>
    </location>
</feature>
<feature type="sequence variant" id="VAR_062323" description="In NTD; uncertain significance." evidence="9">
    <original>F</original>
    <variation>S</variation>
    <location>
        <position position="153"/>
    </location>
</feature>
<feature type="sequence variant" id="VAR_062324" description="In dbSNP:rs201441696." evidence="9">
    <original>R</original>
    <variation>Q</variation>
    <location>
        <position position="175"/>
    </location>
</feature>
<feature type="sequence variant" id="VAR_062325" description="In NTD; uncertain significance; dbSNP:rs761123443." evidence="9">
    <original>R</original>
    <variation>Q</variation>
    <location>
        <position position="181"/>
    </location>
</feature>
<feature type="sequence variant" id="VAR_062326" description="In NTD; uncertain significance." evidence="9">
    <original>L</original>
    <variation>F</variation>
    <location>
        <position position="202"/>
    </location>
</feature>
<feature type="sequence variant" id="VAR_035209" description="In SDAM; abolishes ability to interact with DVL1, DVL2 and DVL3; dbSNP:rs121918218." evidence="8">
    <original>V</original>
    <variation>I</variation>
    <location>
        <position position="239"/>
    </location>
</feature>
<feature type="sequence variant" id="VAR_062327" description="In dbSNP:rs201630629." evidence="9">
    <original>T</original>
    <variation>M</variation>
    <location>
        <position position="251"/>
    </location>
</feature>
<feature type="sequence variant" id="VAR_035210" description="In NTD; does not abolish ability to interact with DVL1, DVL2 and DVL3; dbSNP:rs121918219." evidence="8">
    <original>R</original>
    <variation>Q</variation>
    <location>
        <position position="274"/>
    </location>
</feature>
<feature type="sequence variant" id="VAR_062328" description="In dbSNP:rs145309218." evidence="9">
    <original>Y</original>
    <variation>H</variation>
    <location>
        <position position="290"/>
    </location>
</feature>
<feature type="sequence variant" id="VAR_035211" description="In NTD; does not abolish ability to interact with DVL1, DVL2 and DVL3; dbSNP:rs121918220." evidence="8">
    <original>M</original>
    <variation>T</variation>
    <location>
        <position position="328"/>
    </location>
</feature>
<feature type="sequence variant" id="VAR_035435" description="In dbSNP:rs34059106.">
    <original>E</original>
    <variation>A</variation>
    <location>
        <position position="347"/>
    </location>
</feature>
<feature type="sequence variant" id="VAR_062329" description="In NTD; uncertain significance; dbSNP:rs775571796." evidence="9">
    <original>A</original>
    <variation>S</variation>
    <location>
        <position position="404"/>
    </location>
</feature>
<feature type="sequence variant" id="VAR_062330" evidence="9">
    <original>D</original>
    <variation>E</variation>
    <location>
        <position position="468"/>
    </location>
</feature>
<feature type="helix" evidence="14">
    <location>
        <begin position="115"/>
        <end position="137"/>
    </location>
</feature>
<feature type="turn" evidence="12">
    <location>
        <begin position="139"/>
        <end position="141"/>
    </location>
</feature>
<feature type="helix" evidence="14">
    <location>
        <begin position="147"/>
        <end position="171"/>
    </location>
</feature>
<feature type="helix" evidence="14">
    <location>
        <begin position="184"/>
        <end position="206"/>
    </location>
</feature>
<feature type="turn" evidence="14">
    <location>
        <begin position="207"/>
        <end position="212"/>
    </location>
</feature>
<feature type="helix" evidence="14">
    <location>
        <begin position="216"/>
        <end position="242"/>
    </location>
</feature>
<feature type="turn" evidence="14">
    <location>
        <begin position="243"/>
        <end position="245"/>
    </location>
</feature>
<feature type="strand" evidence="14">
    <location>
        <begin position="250"/>
        <end position="256"/>
    </location>
</feature>
<feature type="turn" evidence="14">
    <location>
        <begin position="257"/>
        <end position="259"/>
    </location>
</feature>
<feature type="strand" evidence="14">
    <location>
        <begin position="262"/>
        <end position="267"/>
    </location>
</feature>
<feature type="helix" evidence="14">
    <location>
        <begin position="272"/>
        <end position="286"/>
    </location>
</feature>
<feature type="helix" evidence="14">
    <location>
        <begin position="292"/>
        <end position="294"/>
    </location>
</feature>
<feature type="helix" evidence="14">
    <location>
        <begin position="296"/>
        <end position="306"/>
    </location>
</feature>
<feature type="helix" evidence="14">
    <location>
        <begin position="328"/>
        <end position="338"/>
    </location>
</feature>
<feature type="helix" evidence="14">
    <location>
        <begin position="342"/>
        <end position="369"/>
    </location>
</feature>
<feature type="strand" evidence="14">
    <location>
        <begin position="372"/>
        <end position="375"/>
    </location>
</feature>
<feature type="strand" evidence="14">
    <location>
        <begin position="386"/>
        <end position="388"/>
    </location>
</feature>
<feature type="helix" evidence="14">
    <location>
        <begin position="390"/>
        <end position="397"/>
    </location>
</feature>
<feature type="helix" evidence="14">
    <location>
        <begin position="398"/>
        <end position="400"/>
    </location>
</feature>
<feature type="helix" evidence="14">
    <location>
        <begin position="402"/>
        <end position="411"/>
    </location>
</feature>
<feature type="turn" evidence="13">
    <location>
        <begin position="415"/>
        <end position="417"/>
    </location>
</feature>
<feature type="helix" evidence="14">
    <location>
        <begin position="420"/>
        <end position="432"/>
    </location>
</feature>
<feature type="helix" evidence="14">
    <location>
        <begin position="437"/>
        <end position="445"/>
    </location>
</feature>
<feature type="helix" evidence="14">
    <location>
        <begin position="450"/>
        <end position="452"/>
    </location>
</feature>
<feature type="turn" evidence="14">
    <location>
        <begin position="455"/>
        <end position="457"/>
    </location>
</feature>
<feature type="strand" evidence="14">
    <location>
        <begin position="463"/>
        <end position="469"/>
    </location>
</feature>
<feature type="strand" evidence="14">
    <location>
        <begin position="480"/>
        <end position="484"/>
    </location>
</feature>
<feature type="strand" evidence="14">
    <location>
        <begin position="489"/>
        <end position="496"/>
    </location>
</feature>
<feature type="strand" evidence="14">
    <location>
        <begin position="500"/>
        <end position="504"/>
    </location>
</feature>
<feature type="helix" evidence="14">
    <location>
        <begin position="509"/>
        <end position="511"/>
    </location>
</feature>
<feature type="strand" evidence="14">
    <location>
        <begin position="514"/>
        <end position="517"/>
    </location>
</feature>
<dbReference type="EMBL" id="AB075805">
    <property type="protein sequence ID" value="BAB86362.1"/>
    <property type="molecule type" value="mRNA"/>
</dbReference>
<dbReference type="EMBL" id="AB057596">
    <property type="protein sequence ID" value="BAB86334.1"/>
    <property type="molecule type" value="mRNA"/>
</dbReference>
<dbReference type="EMBL" id="AF481859">
    <property type="protein sequence ID" value="AAO61751.1"/>
    <property type="molecule type" value="mRNA"/>
</dbReference>
<dbReference type="EMBL" id="AL450389">
    <property type="status" value="NOT_ANNOTATED_CDS"/>
    <property type="molecule type" value="Genomic_DNA"/>
</dbReference>
<dbReference type="EMBL" id="CH471122">
    <property type="protein sequence ID" value="EAW56630.1"/>
    <property type="molecule type" value="Genomic_DNA"/>
</dbReference>
<dbReference type="EMBL" id="CH471122">
    <property type="protein sequence ID" value="EAW56631.1"/>
    <property type="molecule type" value="Genomic_DNA"/>
</dbReference>
<dbReference type="EMBL" id="BC032773">
    <property type="protein sequence ID" value="AAH32773.1"/>
    <property type="status" value="ALT_INIT"/>
    <property type="molecule type" value="mRNA"/>
</dbReference>
<dbReference type="EMBL" id="BC065272">
    <property type="protein sequence ID" value="AAH65272.1"/>
    <property type="molecule type" value="mRNA"/>
</dbReference>
<dbReference type="CCDS" id="CCDS53350.1">
    <molecule id="Q8TAA9-2"/>
</dbReference>
<dbReference type="CCDS" id="CCDS883.1">
    <molecule id="Q8TAA9-1"/>
</dbReference>
<dbReference type="RefSeq" id="NP_001165882.1">
    <molecule id="Q8TAA9-2"/>
    <property type="nucleotide sequence ID" value="NM_001172411.2"/>
</dbReference>
<dbReference type="RefSeq" id="NP_001165883.1">
    <molecule id="Q8TAA9-1"/>
    <property type="nucleotide sequence ID" value="NM_001172412.2"/>
</dbReference>
<dbReference type="RefSeq" id="NP_620409.1">
    <molecule id="Q8TAA9-1"/>
    <property type="nucleotide sequence ID" value="NM_138959.3"/>
</dbReference>
<dbReference type="PDB" id="8ZXD">
    <property type="method" value="EM"/>
    <property type="resolution" value="2.90 A"/>
    <property type="chains" value="A/B/C/D/E/F=1-524"/>
</dbReference>
<dbReference type="PDB" id="9JK6">
    <property type="method" value="EM"/>
    <property type="resolution" value="3.00 A"/>
    <property type="chains" value="A/B/C/D/E/F=1-524"/>
</dbReference>
<dbReference type="PDB" id="9JK8">
    <property type="method" value="EM"/>
    <property type="resolution" value="2.60 A"/>
    <property type="chains" value="A/B/C/D/E/F=1-524"/>
</dbReference>
<dbReference type="PDB" id="9JK9">
    <property type="method" value="EM"/>
    <property type="resolution" value="2.20 A"/>
    <property type="chains" value="A/B/C/D/E/F=1-524"/>
</dbReference>
<dbReference type="PDBsum" id="8ZXD"/>
<dbReference type="PDBsum" id="9JK6"/>
<dbReference type="PDBsum" id="9JK8"/>
<dbReference type="PDBsum" id="9JK9"/>
<dbReference type="EMDB" id="EMD-60540"/>
<dbReference type="EMDB" id="EMD-61545"/>
<dbReference type="EMDB" id="EMD-61547"/>
<dbReference type="EMDB" id="EMD-61548"/>
<dbReference type="SMR" id="Q8TAA9"/>
<dbReference type="BioGRID" id="123595">
    <property type="interactions" value="271"/>
</dbReference>
<dbReference type="CORUM" id="Q8TAA9"/>
<dbReference type="FunCoup" id="Q8TAA9">
    <property type="interactions" value="1212"/>
</dbReference>
<dbReference type="IntAct" id="Q8TAA9">
    <property type="interactions" value="121"/>
</dbReference>
<dbReference type="MINT" id="Q8TAA9"/>
<dbReference type="STRING" id="9606.ENSP00000347672"/>
<dbReference type="TCDB" id="9.B.369.1.1">
    <property type="family name" value="the van gogh-like protein (vangl) family"/>
</dbReference>
<dbReference type="GlyGen" id="Q8TAA9">
    <property type="glycosylation" value="1 site, 1 N-linked glycan (1 site)"/>
</dbReference>
<dbReference type="iPTMnet" id="Q8TAA9"/>
<dbReference type="PhosphoSitePlus" id="Q8TAA9"/>
<dbReference type="SwissPalm" id="Q8TAA9"/>
<dbReference type="BioMuta" id="VANGL1"/>
<dbReference type="DMDM" id="38258809"/>
<dbReference type="jPOST" id="Q8TAA9"/>
<dbReference type="MassIVE" id="Q8TAA9"/>
<dbReference type="PaxDb" id="9606-ENSP00000347672"/>
<dbReference type="PeptideAtlas" id="Q8TAA9"/>
<dbReference type="ProteomicsDB" id="73848">
    <molecule id="Q8TAA9-1"/>
</dbReference>
<dbReference type="ProteomicsDB" id="73849">
    <molecule id="Q8TAA9-2"/>
</dbReference>
<dbReference type="Pumba" id="Q8TAA9"/>
<dbReference type="Antibodypedia" id="20174">
    <property type="antibodies" value="188 antibodies from 31 providers"/>
</dbReference>
<dbReference type="DNASU" id="81839"/>
<dbReference type="Ensembl" id="ENST00000310260.7">
    <molecule id="Q8TAA9-1"/>
    <property type="protein sequence ID" value="ENSP00000310800.3"/>
    <property type="gene ID" value="ENSG00000173218.15"/>
</dbReference>
<dbReference type="Ensembl" id="ENST00000355485.7">
    <molecule id="Q8TAA9-1"/>
    <property type="protein sequence ID" value="ENSP00000347672.2"/>
    <property type="gene ID" value="ENSG00000173218.15"/>
</dbReference>
<dbReference type="Ensembl" id="ENST00000369509.1">
    <molecule id="Q8TAA9-1"/>
    <property type="protein sequence ID" value="ENSP00000358522.1"/>
    <property type="gene ID" value="ENSG00000173218.15"/>
</dbReference>
<dbReference type="Ensembl" id="ENST00000369510.8">
    <molecule id="Q8TAA9-2"/>
    <property type="protein sequence ID" value="ENSP00000358523.3"/>
    <property type="gene ID" value="ENSG00000173218.15"/>
</dbReference>
<dbReference type="GeneID" id="81839"/>
<dbReference type="KEGG" id="hsa:81839"/>
<dbReference type="MANE-Select" id="ENST00000355485.7">
    <property type="protein sequence ID" value="ENSP00000347672.2"/>
    <property type="RefSeq nucleotide sequence ID" value="NM_138959.3"/>
    <property type="RefSeq protein sequence ID" value="NP_620409.1"/>
</dbReference>
<dbReference type="UCSC" id="uc001efv.1">
    <molecule id="Q8TAA9-1"/>
    <property type="organism name" value="human"/>
</dbReference>
<dbReference type="AGR" id="HGNC:15512"/>
<dbReference type="CTD" id="81839"/>
<dbReference type="DisGeNET" id="81839"/>
<dbReference type="GeneCards" id="VANGL1"/>
<dbReference type="HGNC" id="HGNC:15512">
    <property type="gene designation" value="VANGL1"/>
</dbReference>
<dbReference type="HPA" id="ENSG00000173218">
    <property type="expression patterns" value="Low tissue specificity"/>
</dbReference>
<dbReference type="MalaCards" id="VANGL1"/>
<dbReference type="MIM" id="182940">
    <property type="type" value="phenotype"/>
</dbReference>
<dbReference type="MIM" id="600145">
    <property type="type" value="phenotype"/>
</dbReference>
<dbReference type="MIM" id="610132">
    <property type="type" value="gene"/>
</dbReference>
<dbReference type="neXtProt" id="NX_Q8TAA9"/>
<dbReference type="OpenTargets" id="ENSG00000173218"/>
<dbReference type="Orphanet" id="3027">
    <property type="disease" value="Caudal regression syndrome"/>
</dbReference>
<dbReference type="PharmGKB" id="PA37971"/>
<dbReference type="VEuPathDB" id="HostDB:ENSG00000173218"/>
<dbReference type="eggNOG" id="KOG3814">
    <property type="taxonomic scope" value="Eukaryota"/>
</dbReference>
<dbReference type="GeneTree" id="ENSGT00390000012496"/>
<dbReference type="HOGENOM" id="CLU_015742_1_0_1"/>
<dbReference type="InParanoid" id="Q8TAA9"/>
<dbReference type="OMA" id="HWLSRQW"/>
<dbReference type="OrthoDB" id="8887313at2759"/>
<dbReference type="PAN-GO" id="Q8TAA9">
    <property type="GO annotations" value="1 GO annotation based on evolutionary models"/>
</dbReference>
<dbReference type="PhylomeDB" id="Q8TAA9"/>
<dbReference type="TreeFam" id="TF313467"/>
<dbReference type="PathwayCommons" id="Q8TAA9"/>
<dbReference type="Reactome" id="R-HSA-8980692">
    <property type="pathway name" value="RHOA GTPase cycle"/>
</dbReference>
<dbReference type="Reactome" id="R-HSA-9013026">
    <property type="pathway name" value="RHOB GTPase cycle"/>
</dbReference>
<dbReference type="Reactome" id="R-HSA-9013106">
    <property type="pathway name" value="RHOC GTPase cycle"/>
</dbReference>
<dbReference type="Reactome" id="R-HSA-9013148">
    <property type="pathway name" value="CDC42 GTPase cycle"/>
</dbReference>
<dbReference type="Reactome" id="R-HSA-9013149">
    <property type="pathway name" value="RAC1 GTPase cycle"/>
</dbReference>
<dbReference type="Reactome" id="R-HSA-9013404">
    <property type="pathway name" value="RAC2 GTPase cycle"/>
</dbReference>
<dbReference type="Reactome" id="R-HSA-9013405">
    <property type="pathway name" value="RHOD GTPase cycle"/>
</dbReference>
<dbReference type="Reactome" id="R-HSA-9013406">
    <property type="pathway name" value="RHOQ GTPase cycle"/>
</dbReference>
<dbReference type="Reactome" id="R-HSA-9013407">
    <property type="pathway name" value="RHOH GTPase cycle"/>
</dbReference>
<dbReference type="Reactome" id="R-HSA-9013408">
    <property type="pathway name" value="RHOG GTPase cycle"/>
</dbReference>
<dbReference type="Reactome" id="R-HSA-9013409">
    <property type="pathway name" value="RHOJ GTPase cycle"/>
</dbReference>
<dbReference type="Reactome" id="R-HSA-9013420">
    <property type="pathway name" value="RHOU GTPase cycle"/>
</dbReference>
<dbReference type="Reactome" id="R-HSA-9013423">
    <property type="pathway name" value="RAC3 GTPase cycle"/>
</dbReference>
<dbReference type="Reactome" id="R-HSA-9013424">
    <property type="pathway name" value="RHOV GTPase cycle"/>
</dbReference>
<dbReference type="Reactome" id="R-HSA-9035034">
    <property type="pathway name" value="RHOF GTPase cycle"/>
</dbReference>
<dbReference type="Reactome" id="R-HSA-9696264">
    <property type="pathway name" value="RND3 GTPase cycle"/>
</dbReference>
<dbReference type="Reactome" id="R-HSA-9696270">
    <property type="pathway name" value="RND2 GTPase cycle"/>
</dbReference>
<dbReference type="Reactome" id="R-HSA-9696273">
    <property type="pathway name" value="RND1 GTPase cycle"/>
</dbReference>
<dbReference type="SignaLink" id="Q8TAA9"/>
<dbReference type="BioGRID-ORCS" id="81839">
    <property type="hits" value="17 hits in 1156 CRISPR screens"/>
</dbReference>
<dbReference type="ChiTaRS" id="VANGL1">
    <property type="organism name" value="human"/>
</dbReference>
<dbReference type="GenomeRNAi" id="81839"/>
<dbReference type="Pharos" id="Q8TAA9">
    <property type="development level" value="Tbio"/>
</dbReference>
<dbReference type="PRO" id="PR:Q8TAA9"/>
<dbReference type="Proteomes" id="UP000005640">
    <property type="component" value="Chromosome 1"/>
</dbReference>
<dbReference type="RNAct" id="Q8TAA9">
    <property type="molecule type" value="protein"/>
</dbReference>
<dbReference type="Bgee" id="ENSG00000173218">
    <property type="expression patterns" value="Expressed in bronchial epithelial cell and 164 other cell types or tissues"/>
</dbReference>
<dbReference type="ExpressionAtlas" id="Q8TAA9">
    <property type="expression patterns" value="baseline and differential"/>
</dbReference>
<dbReference type="GO" id="GO:0005576">
    <property type="term" value="C:extracellular region"/>
    <property type="evidence" value="ECO:0007669"/>
    <property type="project" value="GOC"/>
</dbReference>
<dbReference type="GO" id="GO:0016328">
    <property type="term" value="C:lateral plasma membrane"/>
    <property type="evidence" value="ECO:0007669"/>
    <property type="project" value="Ensembl"/>
</dbReference>
<dbReference type="GO" id="GO:0005886">
    <property type="term" value="C:plasma membrane"/>
    <property type="evidence" value="ECO:0000318"/>
    <property type="project" value="GO_Central"/>
</dbReference>
<dbReference type="GO" id="GO:0120197">
    <property type="term" value="P:mucociliary clearance"/>
    <property type="evidence" value="ECO:0007669"/>
    <property type="project" value="Ensembl"/>
</dbReference>
<dbReference type="GO" id="GO:0043473">
    <property type="term" value="P:pigmentation"/>
    <property type="evidence" value="ECO:0007669"/>
    <property type="project" value="Ensembl"/>
</dbReference>
<dbReference type="GO" id="GO:0060071">
    <property type="term" value="P:Wnt signaling pathway, planar cell polarity pathway"/>
    <property type="evidence" value="ECO:0000303"/>
    <property type="project" value="ParkinsonsUK-UCL"/>
</dbReference>
<dbReference type="InterPro" id="IPR009539">
    <property type="entry name" value="VANGL"/>
</dbReference>
<dbReference type="PANTHER" id="PTHR20886">
    <property type="entry name" value="VANG-LIKE PROTEIN"/>
    <property type="match status" value="1"/>
</dbReference>
<dbReference type="Pfam" id="PF06638">
    <property type="entry name" value="Strabismus"/>
    <property type="match status" value="1"/>
</dbReference>
<dbReference type="PIRSF" id="PIRSF007991">
    <property type="entry name" value="Strabismus"/>
    <property type="match status" value="1"/>
</dbReference>
<gene>
    <name type="primary">VANGL1</name>
    <name type="synonym">STB2</name>
</gene>
<proteinExistence type="evidence at protein level"/>
<reference key="1">
    <citation type="journal article" date="2002" name="Int. J. Oncol.">
        <title>Molecular cloning and characterization of Strabismus 2 (STB2).</title>
        <authorList>
            <person name="Katoh M."/>
        </authorList>
    </citation>
    <scope>NUCLEOTIDE SEQUENCE [MRNA] (ISOFORM 1)</scope>
    <scope>TISSUE SPECIFICITY</scope>
</reference>
<reference key="2">
    <citation type="journal article" date="2002" name="Int. J. Oncol.">
        <title>Isolation and characterization of a novel human gene, VANGL1, as a therapeutic target for hepatocellular carcinoma.</title>
        <authorList>
            <person name="Yagyu R."/>
            <person name="Hamamoto R."/>
            <person name="Furukawa Y."/>
            <person name="Okabe H."/>
            <person name="Yamamura T."/>
            <person name="Nakamura Y."/>
        </authorList>
    </citation>
    <scope>NUCLEOTIDE SEQUENCE [MRNA] (ISOFORM 1)</scope>
    <scope>TISSUE SPECIFICITY</scope>
</reference>
<reference key="3">
    <citation type="submission" date="2002-02" db="EMBL/GenBank/DDBJ databases">
        <title>Identification of LPP2, a second Vang-like protein.</title>
        <authorList>
            <person name="Doudney K."/>
            <person name="Paternotte C."/>
            <person name="Murdoch J.N."/>
            <person name="Copp A.J."/>
            <person name="Stanier P."/>
        </authorList>
    </citation>
    <scope>NUCLEOTIDE SEQUENCE [MRNA] (ISOFORM 2)</scope>
</reference>
<reference key="4">
    <citation type="journal article" date="2006" name="Nature">
        <title>The DNA sequence and biological annotation of human chromosome 1.</title>
        <authorList>
            <person name="Gregory S.G."/>
            <person name="Barlow K.F."/>
            <person name="McLay K.E."/>
            <person name="Kaul R."/>
            <person name="Swarbreck D."/>
            <person name="Dunham A."/>
            <person name="Scott C.E."/>
            <person name="Howe K.L."/>
            <person name="Woodfine K."/>
            <person name="Spencer C.C.A."/>
            <person name="Jones M.C."/>
            <person name="Gillson C."/>
            <person name="Searle S."/>
            <person name="Zhou Y."/>
            <person name="Kokocinski F."/>
            <person name="McDonald L."/>
            <person name="Evans R."/>
            <person name="Phillips K."/>
            <person name="Atkinson A."/>
            <person name="Cooper R."/>
            <person name="Jones C."/>
            <person name="Hall R.E."/>
            <person name="Andrews T.D."/>
            <person name="Lloyd C."/>
            <person name="Ainscough R."/>
            <person name="Almeida J.P."/>
            <person name="Ambrose K.D."/>
            <person name="Anderson F."/>
            <person name="Andrew R.W."/>
            <person name="Ashwell R.I.S."/>
            <person name="Aubin K."/>
            <person name="Babbage A.K."/>
            <person name="Bagguley C.L."/>
            <person name="Bailey J."/>
            <person name="Beasley H."/>
            <person name="Bethel G."/>
            <person name="Bird C.P."/>
            <person name="Bray-Allen S."/>
            <person name="Brown J.Y."/>
            <person name="Brown A.J."/>
            <person name="Buckley D."/>
            <person name="Burton J."/>
            <person name="Bye J."/>
            <person name="Carder C."/>
            <person name="Chapman J.C."/>
            <person name="Clark S.Y."/>
            <person name="Clarke G."/>
            <person name="Clee C."/>
            <person name="Cobley V."/>
            <person name="Collier R.E."/>
            <person name="Corby N."/>
            <person name="Coville G.J."/>
            <person name="Davies J."/>
            <person name="Deadman R."/>
            <person name="Dunn M."/>
            <person name="Earthrowl M."/>
            <person name="Ellington A.G."/>
            <person name="Errington H."/>
            <person name="Frankish A."/>
            <person name="Frankland J."/>
            <person name="French L."/>
            <person name="Garner P."/>
            <person name="Garnett J."/>
            <person name="Gay L."/>
            <person name="Ghori M.R.J."/>
            <person name="Gibson R."/>
            <person name="Gilby L.M."/>
            <person name="Gillett W."/>
            <person name="Glithero R.J."/>
            <person name="Grafham D.V."/>
            <person name="Griffiths C."/>
            <person name="Griffiths-Jones S."/>
            <person name="Grocock R."/>
            <person name="Hammond S."/>
            <person name="Harrison E.S.I."/>
            <person name="Hart E."/>
            <person name="Haugen E."/>
            <person name="Heath P.D."/>
            <person name="Holmes S."/>
            <person name="Holt K."/>
            <person name="Howden P.J."/>
            <person name="Hunt A.R."/>
            <person name="Hunt S.E."/>
            <person name="Hunter G."/>
            <person name="Isherwood J."/>
            <person name="James R."/>
            <person name="Johnson C."/>
            <person name="Johnson D."/>
            <person name="Joy A."/>
            <person name="Kay M."/>
            <person name="Kershaw J.K."/>
            <person name="Kibukawa M."/>
            <person name="Kimberley A.M."/>
            <person name="King A."/>
            <person name="Knights A.J."/>
            <person name="Lad H."/>
            <person name="Laird G."/>
            <person name="Lawlor S."/>
            <person name="Leongamornlert D.A."/>
            <person name="Lloyd D.M."/>
            <person name="Loveland J."/>
            <person name="Lovell J."/>
            <person name="Lush M.J."/>
            <person name="Lyne R."/>
            <person name="Martin S."/>
            <person name="Mashreghi-Mohammadi M."/>
            <person name="Matthews L."/>
            <person name="Matthews N.S.W."/>
            <person name="McLaren S."/>
            <person name="Milne S."/>
            <person name="Mistry S."/>
            <person name="Moore M.J.F."/>
            <person name="Nickerson T."/>
            <person name="O'Dell C.N."/>
            <person name="Oliver K."/>
            <person name="Palmeiri A."/>
            <person name="Palmer S.A."/>
            <person name="Parker A."/>
            <person name="Patel D."/>
            <person name="Pearce A.V."/>
            <person name="Peck A.I."/>
            <person name="Pelan S."/>
            <person name="Phelps K."/>
            <person name="Phillimore B.J."/>
            <person name="Plumb R."/>
            <person name="Rajan J."/>
            <person name="Raymond C."/>
            <person name="Rouse G."/>
            <person name="Saenphimmachak C."/>
            <person name="Sehra H.K."/>
            <person name="Sheridan E."/>
            <person name="Shownkeen R."/>
            <person name="Sims S."/>
            <person name="Skuce C.D."/>
            <person name="Smith M."/>
            <person name="Steward C."/>
            <person name="Subramanian S."/>
            <person name="Sycamore N."/>
            <person name="Tracey A."/>
            <person name="Tromans A."/>
            <person name="Van Helmond Z."/>
            <person name="Wall M."/>
            <person name="Wallis J.M."/>
            <person name="White S."/>
            <person name="Whitehead S.L."/>
            <person name="Wilkinson J.E."/>
            <person name="Willey D.L."/>
            <person name="Williams H."/>
            <person name="Wilming L."/>
            <person name="Wray P.W."/>
            <person name="Wu Z."/>
            <person name="Coulson A."/>
            <person name="Vaudin M."/>
            <person name="Sulston J.E."/>
            <person name="Durbin R.M."/>
            <person name="Hubbard T."/>
            <person name="Wooster R."/>
            <person name="Dunham I."/>
            <person name="Carter N.P."/>
            <person name="McVean G."/>
            <person name="Ross M.T."/>
            <person name="Harrow J."/>
            <person name="Olson M.V."/>
            <person name="Beck S."/>
            <person name="Rogers J."/>
            <person name="Bentley D.R."/>
        </authorList>
    </citation>
    <scope>NUCLEOTIDE SEQUENCE [LARGE SCALE GENOMIC DNA]</scope>
</reference>
<reference key="5">
    <citation type="submission" date="2005-07" db="EMBL/GenBank/DDBJ databases">
        <authorList>
            <person name="Mural R.J."/>
            <person name="Istrail S."/>
            <person name="Sutton G.G."/>
            <person name="Florea L."/>
            <person name="Halpern A.L."/>
            <person name="Mobarry C.M."/>
            <person name="Lippert R."/>
            <person name="Walenz B."/>
            <person name="Shatkay H."/>
            <person name="Dew I."/>
            <person name="Miller J.R."/>
            <person name="Flanigan M.J."/>
            <person name="Edwards N.J."/>
            <person name="Bolanos R."/>
            <person name="Fasulo D."/>
            <person name="Halldorsson B.V."/>
            <person name="Hannenhalli S."/>
            <person name="Turner R."/>
            <person name="Yooseph S."/>
            <person name="Lu F."/>
            <person name="Nusskern D.R."/>
            <person name="Shue B.C."/>
            <person name="Zheng X.H."/>
            <person name="Zhong F."/>
            <person name="Delcher A.L."/>
            <person name="Huson D.H."/>
            <person name="Kravitz S.A."/>
            <person name="Mouchard L."/>
            <person name="Reinert K."/>
            <person name="Remington K.A."/>
            <person name="Clark A.G."/>
            <person name="Waterman M.S."/>
            <person name="Eichler E.E."/>
            <person name="Adams M.D."/>
            <person name="Hunkapiller M.W."/>
            <person name="Myers E.W."/>
            <person name="Venter J.C."/>
        </authorList>
    </citation>
    <scope>NUCLEOTIDE SEQUENCE [LARGE SCALE GENOMIC DNA]</scope>
</reference>
<reference key="6">
    <citation type="journal article" date="2004" name="Genome Res.">
        <title>The status, quality, and expansion of the NIH full-length cDNA project: the Mammalian Gene Collection (MGC).</title>
        <authorList>
            <consortium name="The MGC Project Team"/>
        </authorList>
    </citation>
    <scope>NUCLEOTIDE SEQUENCE [LARGE SCALE MRNA] (ISOFORM 1)</scope>
    <source>
        <tissue>Prostate</tissue>
        <tissue>Skin</tissue>
    </source>
</reference>
<reference key="7">
    <citation type="journal article" date="2008" name="Mol. Cell">
        <title>Kinase-selective enrichment enables quantitative phosphoproteomics of the kinome across the cell cycle.</title>
        <authorList>
            <person name="Daub H."/>
            <person name="Olsen J.V."/>
            <person name="Bairlein M."/>
            <person name="Gnad F."/>
            <person name="Oppermann F.S."/>
            <person name="Korner R."/>
            <person name="Greff Z."/>
            <person name="Keri G."/>
            <person name="Stemmann O."/>
            <person name="Mann M."/>
        </authorList>
    </citation>
    <scope>IDENTIFICATION BY MASS SPECTROMETRY [LARGE SCALE ANALYSIS]</scope>
    <source>
        <tissue>Cervix carcinoma</tissue>
    </source>
</reference>
<reference key="8">
    <citation type="journal article" date="2008" name="Proc. Natl. Acad. Sci. U.S.A.">
        <title>A quantitative atlas of mitotic phosphorylation.</title>
        <authorList>
            <person name="Dephoure N."/>
            <person name="Zhou C."/>
            <person name="Villen J."/>
            <person name="Beausoleil S.A."/>
            <person name="Bakalarski C.E."/>
            <person name="Elledge S.J."/>
            <person name="Gygi S.P."/>
        </authorList>
    </citation>
    <scope>IDENTIFICATION BY MASS SPECTROMETRY [LARGE SCALE ANALYSIS]</scope>
    <source>
        <tissue>Cervix carcinoma</tissue>
    </source>
</reference>
<reference key="9">
    <citation type="journal article" date="2009" name="Sci. Signal.">
        <title>Quantitative phosphoproteomic analysis of T cell receptor signaling reveals system-wide modulation of protein-protein interactions.</title>
        <authorList>
            <person name="Mayya V."/>
            <person name="Lundgren D.H."/>
            <person name="Hwang S.-I."/>
            <person name="Rezaul K."/>
            <person name="Wu L."/>
            <person name="Eng J.K."/>
            <person name="Rodionov V."/>
            <person name="Han D.K."/>
        </authorList>
    </citation>
    <scope>IDENTIFICATION BY MASS SPECTROMETRY [LARGE SCALE ANALYSIS]</scope>
    <source>
        <tissue>Leukemic T-cell</tissue>
    </source>
</reference>
<reference key="10">
    <citation type="journal article" date="2005" name="Am. J. Med. Genet. A">
        <title>Analysis of the planar cell polarity gene Vangl2 and its co-expressed paralogue Vangl1 in neural tube defect patients.</title>
        <authorList>
            <person name="Doudney K."/>
            <person name="Ybot-Gonzalez P."/>
            <person name="Paternotte C."/>
            <person name="Stevenson R.E."/>
            <person name="Greene N.D."/>
            <person name="Moore G.E."/>
            <person name="Copp A.J."/>
            <person name="Stanier P."/>
        </authorList>
    </citation>
    <scope>VARIANT THR-116</scope>
</reference>
<reference key="11">
    <citation type="journal article" date="2007" name="N. Engl. J. Med.">
        <title>Mutations in VANGL1 associated with neural-tube defects.</title>
        <authorList>
            <person name="Kibar Z."/>
            <person name="Torban E."/>
            <person name="McDearmid J.R."/>
            <person name="Reynolds A."/>
            <person name="Berghout J."/>
            <person name="Mathieu M."/>
            <person name="Kirillova I."/>
            <person name="De Marco P."/>
            <person name="Merello E."/>
            <person name="Hayes J.M."/>
            <person name="Wallingford J.B."/>
            <person name="Drapeau P."/>
            <person name="Capra V."/>
            <person name="Gros P."/>
        </authorList>
    </citation>
    <scope>VARIANT SDAM ILE-239</scope>
    <scope>VARIANTS NTD GLN-274 AND THR-328</scope>
    <scope>CHARACTERIZATION OF VARIANT SDAM ILE-239</scope>
    <scope>CHARACTERIZATION OF VARIANTS NTD GLN-274 AND THR-328</scope>
</reference>
<reference key="12">
    <citation type="journal article" date="2009" name="Hum. Mutat.">
        <title>Novel mutations in VANGL1 in neural tube defects.</title>
        <authorList>
            <person name="Kibar Z."/>
            <person name="Bosoi C.M."/>
            <person name="Kooistra M."/>
            <person name="Salem S."/>
            <person name="Finnell R.H."/>
            <person name="De Marco P."/>
            <person name="Merello E."/>
            <person name="Bassuk A.G."/>
            <person name="Capra V."/>
            <person name="Gros P."/>
        </authorList>
    </citation>
    <scope>VARIANTS NTD LEU-83; SER-153; GLN-181; PHE-202 AND SER-404</scope>
    <scope>VARIANTS LYS-25; GLN-175; MET-251; HIS-290 AND GLU-468</scope>
</reference>
<name>VANG1_HUMAN</name>
<organism>
    <name type="scientific">Homo sapiens</name>
    <name type="common">Human</name>
    <dbReference type="NCBI Taxonomy" id="9606"/>
    <lineage>
        <taxon>Eukaryota</taxon>
        <taxon>Metazoa</taxon>
        <taxon>Chordata</taxon>
        <taxon>Craniata</taxon>
        <taxon>Vertebrata</taxon>
        <taxon>Euteleostomi</taxon>
        <taxon>Mammalia</taxon>
        <taxon>Eutheria</taxon>
        <taxon>Euarchontoglires</taxon>
        <taxon>Primates</taxon>
        <taxon>Haplorrhini</taxon>
        <taxon>Catarrhini</taxon>
        <taxon>Hominidae</taxon>
        <taxon>Homo</taxon>
    </lineage>
</organism>